<protein>
    <recommendedName>
        <fullName>Pituitary adenylate cyclase-activating polypeptide</fullName>
        <shortName>PACAP</shortName>
    </recommendedName>
    <component>
        <recommendedName>
            <fullName>PACAP-related peptide</fullName>
        </recommendedName>
        <alternativeName>
            <fullName>PRP-48</fullName>
        </alternativeName>
    </component>
    <component>
        <recommendedName>
            <fullName>Pituitary adenylate cyclase-activating polypeptide 27</fullName>
            <shortName>PACAP-27</shortName>
            <shortName>PACAP27</shortName>
        </recommendedName>
    </component>
    <component>
        <recommendedName>
            <fullName>Pituitary adenylate cyclase-activating polypeptide 38</fullName>
            <shortName>PACAP-38</shortName>
            <shortName>PACAP38</shortName>
        </recommendedName>
    </component>
</protein>
<sequence>MTMCSGARLALLVYGILMHSSVYGSPAASGLRFPGIRPENEVYDEDGNPQQDFYDSESLGVGSPASALRDAYALYYPAEERDVAHGILNKAYRKVLDQPSARRSPADAHGQGLGWDPGGSADDDSEPLSKRHSDGIFTDSYSRYRKQMAVKKYLAAVLGKRYKQRVKNKGRRIPYL</sequence>
<reference key="1">
    <citation type="submission" date="2005-02" db="EMBL/GenBank/DDBJ databases">
        <title>Characterization of pituitary adenylate cyclase activating polypeptide (PACAP).</title>
        <authorList>
            <person name="Sayasith K."/>
            <person name="Sirois J."/>
        </authorList>
    </citation>
    <scope>NUCLEOTIDE SEQUENCE [MRNA]</scope>
    <source>
        <tissue>Ovarian follicle</tissue>
    </source>
</reference>
<reference key="2">
    <citation type="journal article" date="2013" name="Sci. Signal.">
        <title>Rapgef2 Connects GPCR-Mediated cAMP Signals to ERK Activation in Neuronal and Endocrine Cells.</title>
        <authorList>
            <person name="Emery A.C."/>
            <person name="Eiden M.V."/>
            <person name="Mustafa T."/>
            <person name="Eiden L.E."/>
        </authorList>
    </citation>
    <scope>FUNCTION</scope>
</reference>
<name>PACA_BOVIN</name>
<gene>
    <name type="primary">ADCYAP1</name>
    <name type="synonym">PACAP</name>
</gene>
<keyword id="KW-0027">Amidation</keyword>
<keyword id="KW-0165">Cleavage on pair of basic residues</keyword>
<keyword id="KW-0372">Hormone</keyword>
<keyword id="KW-0524">Neurogenesis</keyword>
<keyword id="KW-1185">Reference proteome</keyword>
<keyword id="KW-0964">Secreted</keyword>
<keyword id="KW-0732">Signal</keyword>
<organism>
    <name type="scientific">Bos taurus</name>
    <name type="common">Bovine</name>
    <dbReference type="NCBI Taxonomy" id="9913"/>
    <lineage>
        <taxon>Eukaryota</taxon>
        <taxon>Metazoa</taxon>
        <taxon>Chordata</taxon>
        <taxon>Craniata</taxon>
        <taxon>Vertebrata</taxon>
        <taxon>Euteleostomi</taxon>
        <taxon>Mammalia</taxon>
        <taxon>Eutheria</taxon>
        <taxon>Laurasiatheria</taxon>
        <taxon>Artiodactyla</taxon>
        <taxon>Ruminantia</taxon>
        <taxon>Pecora</taxon>
        <taxon>Bovidae</taxon>
        <taxon>Bovinae</taxon>
        <taxon>Bos</taxon>
    </lineage>
</organism>
<evidence type="ECO:0000250" key="1"/>
<evidence type="ECO:0000250" key="2">
    <source>
        <dbReference type="UniProtKB" id="O70176"/>
    </source>
</evidence>
<evidence type="ECO:0000250" key="3">
    <source>
        <dbReference type="UniProtKB" id="P13589"/>
    </source>
</evidence>
<evidence type="ECO:0000250" key="4">
    <source>
        <dbReference type="UniProtKB" id="P18509"/>
    </source>
</evidence>
<evidence type="ECO:0000255" key="5"/>
<evidence type="ECO:0000256" key="6">
    <source>
        <dbReference type="SAM" id="MobiDB-lite"/>
    </source>
</evidence>
<evidence type="ECO:0000269" key="7">
    <source>
    </source>
</evidence>
<evidence type="ECO:0000305" key="8"/>
<comment type="function">
    <text evidence="2 3 4 7">PACAP is a neuropeptide involved in diverse array of physiological processes through activating the PACAP subfamily of class B1 G protein-coupled receptors: VIP receptor 1 (VIPR1), VIP receptor 2 (VIPR2), and PACAP type I receptor (ADCYAP1R1) (By similarity). Exerts neuroprotective and general cytoprotective effects due to anti-apoptotic, anti-inflammatory, and antioxidant actions (By similarity). Promotes neuron projection development through the RAPGEF2/Rap1/B-Raf/ERK pathway (PubMed:23800469). In chromaffin cells, induces long-lasting increase of intracellular calcium concentrations and neuroendocrine secretion (By similarity). Involved in the control of glucose homeostasis, induces insulin secretion by pancreatic beta cells (By similarity). PACAP exists in two bioactive forms from proteolysis of the same precursor protein, PACAP27 and PACAP38, which differ by eleven amino acid residues in the C-terminus (By similarity).</text>
</comment>
<comment type="subunit">
    <text evidence="4">Interacts with ADCYAP1R1 (via N-terminal extracellular domain); both PACAP27 and PACAP38 neuropeptides function as ligand for the ADCYAP1R1 receptor, which modulates the activity of downstream effectors. Interacts with VIPR1 and VIPR2; functions as ligand for VIPR1 and VIPR2 receptors, which modulate the activity of downstream effectors.</text>
</comment>
<comment type="subcellular location">
    <subcellularLocation>
        <location evidence="1">Secreted</location>
    </subcellularLocation>
</comment>
<comment type="similarity">
    <text evidence="8">Belongs to the glucagon family.</text>
</comment>
<dbReference type="EMBL" id="AY924308">
    <property type="protein sequence ID" value="AAY16443.1"/>
    <property type="molecule type" value="mRNA"/>
</dbReference>
<dbReference type="RefSeq" id="NP_001040020.1">
    <property type="nucleotide sequence ID" value="NM_001046555.1"/>
</dbReference>
<dbReference type="FunCoup" id="Q29W19">
    <property type="interactions" value="643"/>
</dbReference>
<dbReference type="STRING" id="9913.ENSBTAP00000027516"/>
<dbReference type="PaxDb" id="9913-ENSBTAP00000027516"/>
<dbReference type="GeneID" id="615187"/>
<dbReference type="KEGG" id="bta:615187"/>
<dbReference type="CTD" id="116"/>
<dbReference type="eggNOG" id="ENOG502QSGB">
    <property type="taxonomic scope" value="Eukaryota"/>
</dbReference>
<dbReference type="InParanoid" id="Q29W19"/>
<dbReference type="OrthoDB" id="9875627at2759"/>
<dbReference type="Proteomes" id="UP000009136">
    <property type="component" value="Unplaced"/>
</dbReference>
<dbReference type="GO" id="GO:0005576">
    <property type="term" value="C:extracellular region"/>
    <property type="evidence" value="ECO:0007669"/>
    <property type="project" value="UniProtKB-SubCell"/>
</dbReference>
<dbReference type="GO" id="GO:0043005">
    <property type="term" value="C:neuron projection"/>
    <property type="evidence" value="ECO:0000318"/>
    <property type="project" value="GO_Central"/>
</dbReference>
<dbReference type="GO" id="GO:0043204">
    <property type="term" value="C:perikaryon"/>
    <property type="evidence" value="ECO:0000318"/>
    <property type="project" value="GO_Central"/>
</dbReference>
<dbReference type="GO" id="GO:0005184">
    <property type="term" value="F:neuropeptide hormone activity"/>
    <property type="evidence" value="ECO:0000314"/>
    <property type="project" value="UniProtKB"/>
</dbReference>
<dbReference type="GO" id="GO:0051428">
    <property type="term" value="F:peptide hormone receptor binding"/>
    <property type="evidence" value="ECO:0000250"/>
    <property type="project" value="UniProtKB"/>
</dbReference>
<dbReference type="GO" id="GO:0016521">
    <property type="term" value="F:pituitary adenylate cyclase activating polypeptide activity"/>
    <property type="evidence" value="ECO:0000314"/>
    <property type="project" value="BHF-UCL"/>
</dbReference>
<dbReference type="GO" id="GO:0031891">
    <property type="term" value="F:type 1 vasoactive intestinal polypeptide receptor binding"/>
    <property type="evidence" value="ECO:0000250"/>
    <property type="project" value="UniProtKB"/>
</dbReference>
<dbReference type="GO" id="GO:0031892">
    <property type="term" value="F:type 2 vasoactive intestinal polypeptide receptor binding"/>
    <property type="evidence" value="ECO:0000250"/>
    <property type="project" value="UniProtKB"/>
</dbReference>
<dbReference type="GO" id="GO:0007189">
    <property type="term" value="P:adenylate cyclase-activating G protein-coupled receptor signaling pathway"/>
    <property type="evidence" value="ECO:0000314"/>
    <property type="project" value="BHF-UCL"/>
</dbReference>
<dbReference type="GO" id="GO:0007188">
    <property type="term" value="P:adenylate cyclase-modulating G protein-coupled receptor signaling pathway"/>
    <property type="evidence" value="ECO:0000315"/>
    <property type="project" value="UniProtKB"/>
</dbReference>
<dbReference type="GO" id="GO:0030073">
    <property type="term" value="P:insulin secretion"/>
    <property type="evidence" value="ECO:0000250"/>
    <property type="project" value="UniProtKB"/>
</dbReference>
<dbReference type="GO" id="GO:0031175">
    <property type="term" value="P:neuron projection development"/>
    <property type="evidence" value="ECO:0000314"/>
    <property type="project" value="UniProtKB"/>
</dbReference>
<dbReference type="GO" id="GO:0007218">
    <property type="term" value="P:neuropeptide signaling pathway"/>
    <property type="evidence" value="ECO:0000314"/>
    <property type="project" value="UniProtKB"/>
</dbReference>
<dbReference type="GO" id="GO:0007204">
    <property type="term" value="P:positive regulation of cytosolic calcium ion concentration"/>
    <property type="evidence" value="ECO:0000250"/>
    <property type="project" value="UniProtKB"/>
</dbReference>
<dbReference type="GO" id="GO:0070374">
    <property type="term" value="P:positive regulation of ERK1 and ERK2 cascade"/>
    <property type="evidence" value="ECO:0000314"/>
    <property type="project" value="UniProtKB"/>
</dbReference>
<dbReference type="GO" id="GO:0060124">
    <property type="term" value="P:positive regulation of growth hormone secretion"/>
    <property type="evidence" value="ECO:0000250"/>
    <property type="project" value="UniProtKB"/>
</dbReference>
<dbReference type="GO" id="GO:0043547">
    <property type="term" value="P:positive regulation of GTPase activity"/>
    <property type="evidence" value="ECO:0000314"/>
    <property type="project" value="UniProtKB"/>
</dbReference>
<dbReference type="GO" id="GO:0045860">
    <property type="term" value="P:positive regulation of protein kinase activity"/>
    <property type="evidence" value="ECO:0000314"/>
    <property type="project" value="UniProtKB"/>
</dbReference>
<dbReference type="GO" id="GO:0045944">
    <property type="term" value="P:positive regulation of transcription by RNA polymerase II"/>
    <property type="evidence" value="ECO:0000314"/>
    <property type="project" value="UniProtKB"/>
</dbReference>
<dbReference type="GO" id="GO:0008277">
    <property type="term" value="P:regulation of G protein-coupled receptor signaling pathway"/>
    <property type="evidence" value="ECO:0000250"/>
    <property type="project" value="UniProtKB"/>
</dbReference>
<dbReference type="GO" id="GO:0032880">
    <property type="term" value="P:regulation of protein localization"/>
    <property type="evidence" value="ECO:0000314"/>
    <property type="project" value="BHF-UCL"/>
</dbReference>
<dbReference type="Gene3D" id="6.10.250.590">
    <property type="match status" value="1"/>
</dbReference>
<dbReference type="InterPro" id="IPR000532">
    <property type="entry name" value="Glucagon_GIP_secretin_VIP"/>
</dbReference>
<dbReference type="InterPro" id="IPR046963">
    <property type="entry name" value="VIP/GHRH-like"/>
</dbReference>
<dbReference type="PANTHER" id="PTHR11213">
    <property type="entry name" value="GLUCAGON-FAMILY NEUROPEPTIDE"/>
    <property type="match status" value="1"/>
</dbReference>
<dbReference type="PANTHER" id="PTHR11213:SF1">
    <property type="entry name" value="PITUITARY ADENYLATE CYCLASE-ACTIVATING POLYPEPTIDE"/>
    <property type="match status" value="1"/>
</dbReference>
<dbReference type="Pfam" id="PF00123">
    <property type="entry name" value="Hormone_2"/>
    <property type="match status" value="1"/>
</dbReference>
<dbReference type="PRINTS" id="PR00275">
    <property type="entry name" value="GLUCAGON"/>
</dbReference>
<dbReference type="SMART" id="SM00070">
    <property type="entry name" value="GLUCA"/>
    <property type="match status" value="2"/>
</dbReference>
<dbReference type="PROSITE" id="PS00260">
    <property type="entry name" value="GLUCAGON"/>
    <property type="match status" value="1"/>
</dbReference>
<accession>Q29W19</accession>
<proteinExistence type="evidence at transcript level"/>
<feature type="signal peptide" evidence="5">
    <location>
        <begin position="1"/>
        <end position="24"/>
    </location>
</feature>
<feature type="propeptide" id="PRO_0000240602" evidence="1">
    <location>
        <begin position="25"/>
        <end position="80"/>
    </location>
</feature>
<feature type="peptide" id="PRO_0000240603" description="PACAP-related peptide">
    <location>
        <begin position="82"/>
        <end position="129"/>
    </location>
</feature>
<feature type="peptide" id="PRO_0000240604" description="Pituitary adenylate cyclase-activating polypeptide 38">
    <location>
        <begin position="132"/>
        <end position="169"/>
    </location>
</feature>
<feature type="peptide" id="PRO_0000240605" description="Pituitary adenylate cyclase-activating polypeptide 27">
    <location>
        <begin position="132"/>
        <end position="158"/>
    </location>
</feature>
<feature type="propeptide" id="PRO_0000240606" evidence="1">
    <location>
        <begin position="173"/>
        <end position="176"/>
    </location>
</feature>
<feature type="region of interest" description="Disordered" evidence="6">
    <location>
        <begin position="98"/>
        <end position="135"/>
    </location>
</feature>
<feature type="region of interest" description="Important for receptor binding" evidence="4">
    <location>
        <begin position="150"/>
        <end position="158"/>
    </location>
</feature>
<feature type="modified residue" description="Leucine amide" evidence="4">
    <location>
        <position position="158"/>
    </location>
</feature>
<feature type="modified residue" description="Lysine amide" evidence="4">
    <location>
        <position position="169"/>
    </location>
</feature>